<keyword id="KW-1185">Reference proteome</keyword>
<organism>
    <name type="scientific">Rhodopirellula baltica (strain DSM 10527 / NCIMB 13988 / SH1)</name>
    <dbReference type="NCBI Taxonomy" id="243090"/>
    <lineage>
        <taxon>Bacteria</taxon>
        <taxon>Pseudomonadati</taxon>
        <taxon>Planctomycetota</taxon>
        <taxon>Planctomycetia</taxon>
        <taxon>Pirellulales</taxon>
        <taxon>Pirellulaceae</taxon>
        <taxon>Rhodopirellula</taxon>
    </lineage>
</organism>
<sequence>MNEENAAENESSQPKPLSATARRCLGVLVEKAKTTPDGYPLSLAGLITGCNQKSNRSPQMQVDESDALLALDELRAAGAAREIQGSGRVTKYRHAAYEWLGVDSPGAAIVTELMLRGPQTAGELRTRASRMHKFPDLDSLKTELDSLIEKGLVESLTPPGRGQTFAHCLYTPQERLYLVDKIKKQDASSAAPSQAESGSTSPAKAANDDRIDKIQERLDSVTAKLEALEKRLEFLES</sequence>
<comment type="similarity">
    <text evidence="1">Belongs to the UPF0502 family.</text>
</comment>
<protein>
    <recommendedName>
        <fullName evidence="1">UPF0502 protein RB6530</fullName>
    </recommendedName>
</protein>
<accession>Q7UQ43</accession>
<feature type="chain" id="PRO_0000309417" description="UPF0502 protein RB6530">
    <location>
        <begin position="1"/>
        <end position="237"/>
    </location>
</feature>
<feature type="region of interest" description="Disordered" evidence="2">
    <location>
        <begin position="187"/>
        <end position="211"/>
    </location>
</feature>
<feature type="compositionally biased region" description="Polar residues" evidence="2">
    <location>
        <begin position="187"/>
        <end position="202"/>
    </location>
</feature>
<name>Y6530_RHOBA</name>
<reference key="1">
    <citation type="journal article" date="2003" name="Proc. Natl. Acad. Sci. U.S.A.">
        <title>Complete genome sequence of the marine planctomycete Pirellula sp. strain 1.</title>
        <authorList>
            <person name="Gloeckner F.O."/>
            <person name="Kube M."/>
            <person name="Bauer M."/>
            <person name="Teeling H."/>
            <person name="Lombardot T."/>
            <person name="Ludwig W."/>
            <person name="Gade D."/>
            <person name="Beck A."/>
            <person name="Borzym K."/>
            <person name="Heitmann K."/>
            <person name="Rabus R."/>
            <person name="Schlesner H."/>
            <person name="Amann R."/>
            <person name="Reinhardt R."/>
        </authorList>
    </citation>
    <scope>NUCLEOTIDE SEQUENCE [LARGE SCALE GENOMIC DNA]</scope>
    <source>
        <strain>DSM 10527 / NCIMB 13988 / SH1</strain>
    </source>
</reference>
<gene>
    <name type="ordered locus">RB6530</name>
</gene>
<dbReference type="EMBL" id="BX294144">
    <property type="protein sequence ID" value="CAD74862.1"/>
    <property type="molecule type" value="Genomic_DNA"/>
</dbReference>
<dbReference type="RefSeq" id="NP_867316.1">
    <property type="nucleotide sequence ID" value="NC_005027.1"/>
</dbReference>
<dbReference type="RefSeq" id="WP_011120970.1">
    <property type="nucleotide sequence ID" value="NC_005027.1"/>
</dbReference>
<dbReference type="SMR" id="Q7UQ43"/>
<dbReference type="FunCoup" id="Q7UQ43">
    <property type="interactions" value="8"/>
</dbReference>
<dbReference type="STRING" id="243090.RB6530"/>
<dbReference type="EnsemblBacteria" id="CAD74862">
    <property type="protein sequence ID" value="CAD74862"/>
    <property type="gene ID" value="RB6530"/>
</dbReference>
<dbReference type="KEGG" id="rba:RB6530"/>
<dbReference type="PATRIC" id="fig|243090.15.peg.3164"/>
<dbReference type="eggNOG" id="COG3132">
    <property type="taxonomic scope" value="Bacteria"/>
</dbReference>
<dbReference type="HOGENOM" id="CLU_057831_1_0_0"/>
<dbReference type="InParanoid" id="Q7UQ43"/>
<dbReference type="OrthoDB" id="9784785at2"/>
<dbReference type="Proteomes" id="UP000001025">
    <property type="component" value="Chromosome"/>
</dbReference>
<dbReference type="Gene3D" id="1.10.10.10">
    <property type="entry name" value="Winged helix-like DNA-binding domain superfamily/Winged helix DNA-binding domain"/>
    <property type="match status" value="2"/>
</dbReference>
<dbReference type="HAMAP" id="MF_01584">
    <property type="entry name" value="UPF0502"/>
    <property type="match status" value="1"/>
</dbReference>
<dbReference type="InterPro" id="IPR007432">
    <property type="entry name" value="DUF480"/>
</dbReference>
<dbReference type="InterPro" id="IPR036388">
    <property type="entry name" value="WH-like_DNA-bd_sf"/>
</dbReference>
<dbReference type="InterPro" id="IPR036390">
    <property type="entry name" value="WH_DNA-bd_sf"/>
</dbReference>
<dbReference type="PANTHER" id="PTHR38768">
    <property type="entry name" value="UPF0502 PROTEIN YCEH"/>
    <property type="match status" value="1"/>
</dbReference>
<dbReference type="PANTHER" id="PTHR38768:SF1">
    <property type="entry name" value="UPF0502 PROTEIN YCEH"/>
    <property type="match status" value="1"/>
</dbReference>
<dbReference type="Pfam" id="PF04337">
    <property type="entry name" value="DUF480"/>
    <property type="match status" value="1"/>
</dbReference>
<dbReference type="SUPFAM" id="SSF46785">
    <property type="entry name" value="Winged helix' DNA-binding domain"/>
    <property type="match status" value="2"/>
</dbReference>
<proteinExistence type="inferred from homology"/>
<evidence type="ECO:0000255" key="1">
    <source>
        <dbReference type="HAMAP-Rule" id="MF_01584"/>
    </source>
</evidence>
<evidence type="ECO:0000256" key="2">
    <source>
        <dbReference type="SAM" id="MobiDB-lite"/>
    </source>
</evidence>